<protein>
    <recommendedName>
        <fullName evidence="1">DNA ligase</fullName>
        <ecNumber evidence="1">6.5.1.2</ecNumber>
    </recommendedName>
    <alternativeName>
        <fullName evidence="1">Polydeoxyribonucleotide synthase [NAD(+)]</fullName>
    </alternativeName>
</protein>
<evidence type="ECO:0000255" key="1">
    <source>
        <dbReference type="HAMAP-Rule" id="MF_01588"/>
    </source>
</evidence>
<proteinExistence type="inferred from homology"/>
<organism>
    <name type="scientific">Corynebacterium glutamicum (strain ATCC 13032 / DSM 20300 / JCM 1318 / BCRC 11384 / CCUG 27702 / LMG 3730 / NBRC 12168 / NCIMB 10025 / NRRL B-2784 / 534)</name>
    <dbReference type="NCBI Taxonomy" id="196627"/>
    <lineage>
        <taxon>Bacteria</taxon>
        <taxon>Bacillati</taxon>
        <taxon>Actinomycetota</taxon>
        <taxon>Actinomycetes</taxon>
        <taxon>Mycobacteriales</taxon>
        <taxon>Corynebacteriaceae</taxon>
        <taxon>Corynebacterium</taxon>
    </lineage>
</organism>
<feature type="chain" id="PRO_0000313206" description="DNA ligase">
    <location>
        <begin position="1"/>
        <end position="680"/>
    </location>
</feature>
<feature type="domain" description="BRCT" evidence="1">
    <location>
        <begin position="597"/>
        <end position="680"/>
    </location>
</feature>
<feature type="active site" description="N6-AMP-lysine intermediate" evidence="1">
    <location>
        <position position="113"/>
    </location>
</feature>
<feature type="binding site" evidence="1">
    <location>
        <begin position="35"/>
        <end position="39"/>
    </location>
    <ligand>
        <name>NAD(+)</name>
        <dbReference type="ChEBI" id="CHEBI:57540"/>
    </ligand>
</feature>
<feature type="binding site" evidence="1">
    <location>
        <begin position="86"/>
        <end position="87"/>
    </location>
    <ligand>
        <name>NAD(+)</name>
        <dbReference type="ChEBI" id="CHEBI:57540"/>
    </ligand>
</feature>
<feature type="binding site" evidence="1">
    <location>
        <position position="111"/>
    </location>
    <ligand>
        <name>NAD(+)</name>
        <dbReference type="ChEBI" id="CHEBI:57540"/>
    </ligand>
</feature>
<feature type="binding site" evidence="1">
    <location>
        <position position="134"/>
    </location>
    <ligand>
        <name>NAD(+)</name>
        <dbReference type="ChEBI" id="CHEBI:57540"/>
    </ligand>
</feature>
<feature type="binding site" evidence="1">
    <location>
        <position position="174"/>
    </location>
    <ligand>
        <name>NAD(+)</name>
        <dbReference type="ChEBI" id="CHEBI:57540"/>
    </ligand>
</feature>
<feature type="binding site" evidence="1">
    <location>
        <position position="290"/>
    </location>
    <ligand>
        <name>NAD(+)</name>
        <dbReference type="ChEBI" id="CHEBI:57540"/>
    </ligand>
</feature>
<feature type="binding site" evidence="1">
    <location>
        <position position="314"/>
    </location>
    <ligand>
        <name>NAD(+)</name>
        <dbReference type="ChEBI" id="CHEBI:57540"/>
    </ligand>
</feature>
<feature type="binding site" evidence="1">
    <location>
        <position position="408"/>
    </location>
    <ligand>
        <name>Zn(2+)</name>
        <dbReference type="ChEBI" id="CHEBI:29105"/>
    </ligand>
</feature>
<feature type="binding site" evidence="1">
    <location>
        <position position="411"/>
    </location>
    <ligand>
        <name>Zn(2+)</name>
        <dbReference type="ChEBI" id="CHEBI:29105"/>
    </ligand>
</feature>
<feature type="binding site" evidence="1">
    <location>
        <position position="427"/>
    </location>
    <ligand>
        <name>Zn(2+)</name>
        <dbReference type="ChEBI" id="CHEBI:29105"/>
    </ligand>
</feature>
<feature type="binding site" evidence="1">
    <location>
        <position position="433"/>
    </location>
    <ligand>
        <name>Zn(2+)</name>
        <dbReference type="ChEBI" id="CHEBI:29105"/>
    </ligand>
</feature>
<comment type="function">
    <text evidence="1">DNA ligase that catalyzes the formation of phosphodiester linkages between 5'-phosphoryl and 3'-hydroxyl groups in double-stranded DNA using NAD as a coenzyme and as the energy source for the reaction. It is essential for DNA replication and repair of damaged DNA.</text>
</comment>
<comment type="catalytic activity">
    <reaction evidence="1">
        <text>NAD(+) + (deoxyribonucleotide)n-3'-hydroxyl + 5'-phospho-(deoxyribonucleotide)m = (deoxyribonucleotide)n+m + AMP + beta-nicotinamide D-nucleotide.</text>
        <dbReference type="EC" id="6.5.1.2"/>
    </reaction>
</comment>
<comment type="cofactor">
    <cofactor evidence="1">
        <name>Mg(2+)</name>
        <dbReference type="ChEBI" id="CHEBI:18420"/>
    </cofactor>
    <cofactor evidence="1">
        <name>Mn(2+)</name>
        <dbReference type="ChEBI" id="CHEBI:29035"/>
    </cofactor>
</comment>
<comment type="similarity">
    <text evidence="1">Belongs to the NAD-dependent DNA ligase family. LigA subfamily.</text>
</comment>
<sequence length="680" mass="74706">MTEDNAQLRRTWNDLAEKVRYHRDRYYNEQPEIPDADFDALFKQLQQLEEDHPELAVPDSPTMVVGAPVAEQSSFDNVEHLERMLSLDNVFDEQELRDWLGRTPAKQYLTELKIDGLSIDLVYRNGQLERAATRGDGRVGEDITANARVIEDIPHQLQGTDEYPVPAVLEIRGEVFITVEDFPEVNAQRIADGGKPFANPRNAAAGSLRQKNIEDVKKRRLRMISHGIGFTEGFSPASQHDAYLALAAWGLPTSPYTEAVTDPEDVVKKVSYWADHRHDALHEMDGLVIKVDDIASQRALGSTSRAPRWAIAYKYPPEEVTTKLLDIQVGVGRTGRVTPFAVMEPVLVAGSTVSMATLHNQSEVKRKGVLIGDTVVIRKAGEVIPEVLGPVVELRDGTEREYIFPTLCPECGTRLAPAKADDVDWRCPNMQSCPGQLSTRLTYLAGRGAFDIEALGEKGAEDLIRTGILLDESGLFDLTEDDLLSSNVYTTNAGKVNASGKKLLDNLQKSKQTDLWRVLVALSIRHVGPTAARALAGRYHSIQALIDAPLEELSETDGVGTIIAQSFKDWFEVDWHKAIVDKWAAAGVTMEEEVGEVAEQTLEGLTIVVTGGLEGFTRDSVKEAIISRGGKASGSVSKKTDYVVIGENAGSKATKAEELGLRILDEAGFVRLLNTGSADE</sequence>
<keyword id="KW-0227">DNA damage</keyword>
<keyword id="KW-0234">DNA repair</keyword>
<keyword id="KW-0235">DNA replication</keyword>
<keyword id="KW-0436">Ligase</keyword>
<keyword id="KW-0460">Magnesium</keyword>
<keyword id="KW-0464">Manganese</keyword>
<keyword id="KW-0479">Metal-binding</keyword>
<keyword id="KW-0520">NAD</keyword>
<keyword id="KW-1185">Reference proteome</keyword>
<keyword id="KW-0862">Zinc</keyword>
<accession>Q8NR20</accession>
<accession>Q6M5U1</accession>
<gene>
    <name evidence="1" type="primary">ligA</name>
    <name type="ordered locus">Cgl1244</name>
    <name type="ordered locus">cg1401</name>
</gene>
<reference key="1">
    <citation type="journal article" date="2003" name="Appl. Microbiol. Biotechnol.">
        <title>The Corynebacterium glutamicum genome: features and impacts on biotechnological processes.</title>
        <authorList>
            <person name="Ikeda M."/>
            <person name="Nakagawa S."/>
        </authorList>
    </citation>
    <scope>NUCLEOTIDE SEQUENCE [LARGE SCALE GENOMIC DNA]</scope>
    <source>
        <strain>ATCC 13032 / DSM 20300 / JCM 1318 / BCRC 11384 / CCUG 27702 / LMG 3730 / NBRC 12168 / NCIMB 10025 / NRRL B-2784 / 534</strain>
    </source>
</reference>
<reference key="2">
    <citation type="journal article" date="2003" name="J. Biotechnol.">
        <title>The complete Corynebacterium glutamicum ATCC 13032 genome sequence and its impact on the production of L-aspartate-derived amino acids and vitamins.</title>
        <authorList>
            <person name="Kalinowski J."/>
            <person name="Bathe B."/>
            <person name="Bartels D."/>
            <person name="Bischoff N."/>
            <person name="Bott M."/>
            <person name="Burkovski A."/>
            <person name="Dusch N."/>
            <person name="Eggeling L."/>
            <person name="Eikmanns B.J."/>
            <person name="Gaigalat L."/>
            <person name="Goesmann A."/>
            <person name="Hartmann M."/>
            <person name="Huthmacher K."/>
            <person name="Kraemer R."/>
            <person name="Linke B."/>
            <person name="McHardy A.C."/>
            <person name="Meyer F."/>
            <person name="Moeckel B."/>
            <person name="Pfefferle W."/>
            <person name="Puehler A."/>
            <person name="Rey D.A."/>
            <person name="Rueckert C."/>
            <person name="Rupp O."/>
            <person name="Sahm H."/>
            <person name="Wendisch V.F."/>
            <person name="Wiegraebe I."/>
            <person name="Tauch A."/>
        </authorList>
    </citation>
    <scope>NUCLEOTIDE SEQUENCE [LARGE SCALE GENOMIC DNA]</scope>
    <source>
        <strain>ATCC 13032 / DSM 20300 / JCM 1318 / BCRC 11384 / CCUG 27702 / LMG 3730 / NBRC 12168 / NCIMB 10025 / NRRL B-2784 / 534</strain>
    </source>
</reference>
<name>DNLJ_CORGL</name>
<dbReference type="EC" id="6.5.1.2" evidence="1"/>
<dbReference type="EMBL" id="BA000036">
    <property type="protein sequence ID" value="BAB98637.1"/>
    <property type="molecule type" value="Genomic_DNA"/>
</dbReference>
<dbReference type="EMBL" id="BX927151">
    <property type="protein sequence ID" value="CAF19947.1"/>
    <property type="molecule type" value="Genomic_DNA"/>
</dbReference>
<dbReference type="RefSeq" id="NP_600467.1">
    <property type="nucleotide sequence ID" value="NC_003450.3"/>
</dbReference>
<dbReference type="RefSeq" id="WP_011014227.1">
    <property type="nucleotide sequence ID" value="NC_006958.1"/>
</dbReference>
<dbReference type="SMR" id="Q8NR20"/>
<dbReference type="STRING" id="196627.cg1401"/>
<dbReference type="GeneID" id="1019226"/>
<dbReference type="KEGG" id="cgb:cg1401"/>
<dbReference type="KEGG" id="cgl:Cgl1244"/>
<dbReference type="PATRIC" id="fig|196627.13.peg.1221"/>
<dbReference type="eggNOG" id="COG0272">
    <property type="taxonomic scope" value="Bacteria"/>
</dbReference>
<dbReference type="HOGENOM" id="CLU_007764_2_1_11"/>
<dbReference type="OrthoDB" id="9759736at2"/>
<dbReference type="BioCyc" id="CORYNE:G18NG-10817-MONOMER"/>
<dbReference type="Proteomes" id="UP000000582">
    <property type="component" value="Chromosome"/>
</dbReference>
<dbReference type="Proteomes" id="UP000001009">
    <property type="component" value="Chromosome"/>
</dbReference>
<dbReference type="GO" id="GO:0005829">
    <property type="term" value="C:cytosol"/>
    <property type="evidence" value="ECO:0007669"/>
    <property type="project" value="TreeGrafter"/>
</dbReference>
<dbReference type="GO" id="GO:0003911">
    <property type="term" value="F:DNA ligase (NAD+) activity"/>
    <property type="evidence" value="ECO:0007669"/>
    <property type="project" value="UniProtKB-UniRule"/>
</dbReference>
<dbReference type="GO" id="GO:0046872">
    <property type="term" value="F:metal ion binding"/>
    <property type="evidence" value="ECO:0007669"/>
    <property type="project" value="UniProtKB-KW"/>
</dbReference>
<dbReference type="GO" id="GO:0006281">
    <property type="term" value="P:DNA repair"/>
    <property type="evidence" value="ECO:0007669"/>
    <property type="project" value="UniProtKB-KW"/>
</dbReference>
<dbReference type="GO" id="GO:0006260">
    <property type="term" value="P:DNA replication"/>
    <property type="evidence" value="ECO:0007669"/>
    <property type="project" value="UniProtKB-KW"/>
</dbReference>
<dbReference type="CDD" id="cd17748">
    <property type="entry name" value="BRCT_DNA_ligase_like"/>
    <property type="match status" value="1"/>
</dbReference>
<dbReference type="CDD" id="cd00114">
    <property type="entry name" value="LIGANc"/>
    <property type="match status" value="1"/>
</dbReference>
<dbReference type="FunFam" id="2.40.50.140:FF:000012">
    <property type="entry name" value="DNA ligase"/>
    <property type="match status" value="1"/>
</dbReference>
<dbReference type="FunFam" id="3.40.50.10190:FF:000054">
    <property type="entry name" value="DNA ligase"/>
    <property type="match status" value="1"/>
</dbReference>
<dbReference type="Gene3D" id="6.20.10.30">
    <property type="match status" value="1"/>
</dbReference>
<dbReference type="Gene3D" id="1.10.150.20">
    <property type="entry name" value="5' to 3' exonuclease, C-terminal subdomain"/>
    <property type="match status" value="2"/>
</dbReference>
<dbReference type="Gene3D" id="3.40.50.10190">
    <property type="entry name" value="BRCT domain"/>
    <property type="match status" value="1"/>
</dbReference>
<dbReference type="Gene3D" id="3.30.470.30">
    <property type="entry name" value="DNA ligase/mRNA capping enzyme"/>
    <property type="match status" value="1"/>
</dbReference>
<dbReference type="Gene3D" id="1.10.287.610">
    <property type="entry name" value="Helix hairpin bin"/>
    <property type="match status" value="1"/>
</dbReference>
<dbReference type="Gene3D" id="2.40.50.140">
    <property type="entry name" value="Nucleic acid-binding proteins"/>
    <property type="match status" value="1"/>
</dbReference>
<dbReference type="HAMAP" id="MF_01588">
    <property type="entry name" value="DNA_ligase_A"/>
    <property type="match status" value="1"/>
</dbReference>
<dbReference type="InterPro" id="IPR001357">
    <property type="entry name" value="BRCT_dom"/>
</dbReference>
<dbReference type="InterPro" id="IPR036420">
    <property type="entry name" value="BRCT_dom_sf"/>
</dbReference>
<dbReference type="InterPro" id="IPR041663">
    <property type="entry name" value="DisA/LigA_HHH"/>
</dbReference>
<dbReference type="InterPro" id="IPR001679">
    <property type="entry name" value="DNA_ligase"/>
</dbReference>
<dbReference type="InterPro" id="IPR018239">
    <property type="entry name" value="DNA_ligase_AS"/>
</dbReference>
<dbReference type="InterPro" id="IPR033136">
    <property type="entry name" value="DNA_ligase_CS"/>
</dbReference>
<dbReference type="InterPro" id="IPR013839">
    <property type="entry name" value="DNAligase_adenylation"/>
</dbReference>
<dbReference type="InterPro" id="IPR013840">
    <property type="entry name" value="DNAligase_N"/>
</dbReference>
<dbReference type="InterPro" id="IPR012340">
    <property type="entry name" value="NA-bd_OB-fold"/>
</dbReference>
<dbReference type="InterPro" id="IPR004150">
    <property type="entry name" value="NAD_DNA_ligase_OB"/>
</dbReference>
<dbReference type="InterPro" id="IPR010994">
    <property type="entry name" value="RuvA_2-like"/>
</dbReference>
<dbReference type="InterPro" id="IPR004149">
    <property type="entry name" value="Znf_DNAligase_C4"/>
</dbReference>
<dbReference type="NCBIfam" id="TIGR00575">
    <property type="entry name" value="dnlj"/>
    <property type="match status" value="1"/>
</dbReference>
<dbReference type="NCBIfam" id="NF005932">
    <property type="entry name" value="PRK07956.1"/>
    <property type="match status" value="1"/>
</dbReference>
<dbReference type="PANTHER" id="PTHR23389">
    <property type="entry name" value="CHROMOSOME TRANSMISSION FIDELITY FACTOR 18"/>
    <property type="match status" value="1"/>
</dbReference>
<dbReference type="PANTHER" id="PTHR23389:SF9">
    <property type="entry name" value="DNA LIGASE"/>
    <property type="match status" value="1"/>
</dbReference>
<dbReference type="Pfam" id="PF00533">
    <property type="entry name" value="BRCT"/>
    <property type="match status" value="1"/>
</dbReference>
<dbReference type="Pfam" id="PF01653">
    <property type="entry name" value="DNA_ligase_aden"/>
    <property type="match status" value="1"/>
</dbReference>
<dbReference type="Pfam" id="PF03120">
    <property type="entry name" value="DNA_ligase_OB"/>
    <property type="match status" value="1"/>
</dbReference>
<dbReference type="Pfam" id="PF03119">
    <property type="entry name" value="DNA_ligase_ZBD"/>
    <property type="match status" value="1"/>
</dbReference>
<dbReference type="Pfam" id="PF12826">
    <property type="entry name" value="HHH_2"/>
    <property type="match status" value="1"/>
</dbReference>
<dbReference type="PIRSF" id="PIRSF001604">
    <property type="entry name" value="LigA"/>
    <property type="match status" value="1"/>
</dbReference>
<dbReference type="SMART" id="SM00292">
    <property type="entry name" value="BRCT"/>
    <property type="match status" value="1"/>
</dbReference>
<dbReference type="SMART" id="SM00532">
    <property type="entry name" value="LIGANc"/>
    <property type="match status" value="1"/>
</dbReference>
<dbReference type="SUPFAM" id="SSF52113">
    <property type="entry name" value="BRCT domain"/>
    <property type="match status" value="1"/>
</dbReference>
<dbReference type="SUPFAM" id="SSF56091">
    <property type="entry name" value="DNA ligase/mRNA capping enzyme, catalytic domain"/>
    <property type="match status" value="1"/>
</dbReference>
<dbReference type="SUPFAM" id="SSF50249">
    <property type="entry name" value="Nucleic acid-binding proteins"/>
    <property type="match status" value="1"/>
</dbReference>
<dbReference type="SUPFAM" id="SSF47781">
    <property type="entry name" value="RuvA domain 2-like"/>
    <property type="match status" value="1"/>
</dbReference>
<dbReference type="PROSITE" id="PS50172">
    <property type="entry name" value="BRCT"/>
    <property type="match status" value="1"/>
</dbReference>
<dbReference type="PROSITE" id="PS01055">
    <property type="entry name" value="DNA_LIGASE_N1"/>
    <property type="match status" value="1"/>
</dbReference>
<dbReference type="PROSITE" id="PS01056">
    <property type="entry name" value="DNA_LIGASE_N2"/>
    <property type="match status" value="1"/>
</dbReference>